<proteinExistence type="evidence at transcript level"/>
<evidence type="ECO:0000250" key="1">
    <source>
        <dbReference type="UniProtKB" id="Q86TL2"/>
    </source>
</evidence>
<evidence type="ECO:0000255" key="2"/>
<evidence type="ECO:0000256" key="3">
    <source>
        <dbReference type="SAM" id="MobiDB-lite"/>
    </source>
</evidence>
<evidence type="ECO:0000305" key="4"/>
<evidence type="ECO:0000312" key="5">
    <source>
        <dbReference type="RGD" id="735152"/>
    </source>
</evidence>
<sequence length="288" mass="32470">MQGPGGNVSRGLPGGPASTVASGAGRCESGALMHSFGIFLQGLLGVVAFSTLMLKRFREPKHERRPWRIWFLDTSKQAIGMLFIHFANVYLADLTEEDPCSLYLINFLLDATVGMLLIYVGVRAVGVLVEWQQWESLRFGEYGDPLQCGAWVGQCALYIVIMIFEKSVVFIVLLILQWKKVALLNPIENPDLKLAIVMLIVPFFVNAFMFWVVDNFLMRKGKTKAKLEERGANQDSRNGSKVRYRRAASHEESESEILISADDEMEESDAEEDLRRPVKKKHRFGLPV</sequence>
<protein>
    <recommendedName>
        <fullName evidence="1">Store-operated calcium entry regulator STIMATE</fullName>
    </recommendedName>
    <alternativeName>
        <fullName evidence="1">STIM-activating enhancer encoded by TMEM110</fullName>
    </alternativeName>
    <alternativeName>
        <fullName evidence="4">Transmembrane protein 110</fullName>
    </alternativeName>
</protein>
<accession>Q7TSW6</accession>
<name>STIMA_RAT</name>
<feature type="chain" id="PRO_0000243917" description="Store-operated calcium entry regulator STIMATE">
    <location>
        <begin position="1"/>
        <end position="288"/>
    </location>
</feature>
<feature type="topological domain" description="Cytoplasmic" evidence="1">
    <location>
        <begin position="1"/>
        <end position="28"/>
    </location>
</feature>
<feature type="transmembrane region" description="Helical" evidence="2">
    <location>
        <begin position="29"/>
        <end position="49"/>
    </location>
</feature>
<feature type="transmembrane region" description="Helical" evidence="2">
    <location>
        <begin position="69"/>
        <end position="89"/>
    </location>
</feature>
<feature type="transmembrane region" description="Helical" evidence="2">
    <location>
        <begin position="102"/>
        <end position="122"/>
    </location>
</feature>
<feature type="transmembrane region" description="Helical" evidence="2">
    <location>
        <begin position="156"/>
        <end position="176"/>
    </location>
</feature>
<feature type="transmembrane region" description="Helical" evidence="2">
    <location>
        <begin position="194"/>
        <end position="214"/>
    </location>
</feature>
<feature type="topological domain" description="Cytoplasmic" evidence="1">
    <location>
        <begin position="215"/>
        <end position="288"/>
    </location>
</feature>
<feature type="region of interest" description="Disordered" evidence="3">
    <location>
        <begin position="228"/>
        <end position="288"/>
    </location>
</feature>
<feature type="region of interest" description="Required for localization in the endoplasmic reticulum" evidence="1">
    <location>
        <begin position="241"/>
        <end position="246"/>
    </location>
</feature>
<feature type="short sequence motif" description="GXXXG motif" evidence="1">
    <location>
        <begin position="149"/>
        <end position="153"/>
    </location>
</feature>
<feature type="compositionally biased region" description="Acidic residues" evidence="3">
    <location>
        <begin position="261"/>
        <end position="272"/>
    </location>
</feature>
<feature type="compositionally biased region" description="Basic residues" evidence="3">
    <location>
        <begin position="277"/>
        <end position="288"/>
    </location>
</feature>
<comment type="function">
    <text evidence="1">Acts as a regulator of store-operated Ca(2+) entry (SOCE) at junctional sites that connect the endoplasmic reticulum (ER) and plasma membrane (PM), called ER-plasma membrane (ER-PM) junction or cortical ER. SOCE is a Ca(2+) influx following depletion of intracellular Ca(2+) stores. Acts by interacting with STIM1, promoting STIM1 conformational switch. Involved in STIM1 relocalization to ER-PM junctions. Contributes to the maintenance and reorganization of store-dependent ER-PM junctions.</text>
</comment>
<comment type="subunit">
    <text evidence="1">Homooligomer. Interacts with STIM1.</text>
</comment>
<comment type="subcellular location">
    <subcellularLocation>
        <location evidence="1">Endoplasmic reticulum membrane</location>
        <topology evidence="1">Multi-pass membrane protein</topology>
    </subcellularLocation>
    <text evidence="1">Colocalizes with STIM1 at ER-plasma membrane (ER-PM) junctions, also called cortical endoplasmic reticulum (ER), in store-depleted calcium cells. May translocate to ER-PM junctions in a STIM1-dependent manner in store-depleted cells.</text>
</comment>
<comment type="domain">
    <text evidence="1">The GXXXG motif may mediate oligomerization. The C-terminus is necessary for its localization at ER-plasma membrane (ER-PM) junctions as well as for the store-dependent rearrangement of ER-PM junctions.</text>
</comment>
<comment type="similarity">
    <text evidence="4">Belongs to the STIMATE family.</text>
</comment>
<organism>
    <name type="scientific">Rattus norvegicus</name>
    <name type="common">Rat</name>
    <dbReference type="NCBI Taxonomy" id="10116"/>
    <lineage>
        <taxon>Eukaryota</taxon>
        <taxon>Metazoa</taxon>
        <taxon>Chordata</taxon>
        <taxon>Craniata</taxon>
        <taxon>Vertebrata</taxon>
        <taxon>Euteleostomi</taxon>
        <taxon>Mammalia</taxon>
        <taxon>Eutheria</taxon>
        <taxon>Euarchontoglires</taxon>
        <taxon>Glires</taxon>
        <taxon>Rodentia</taxon>
        <taxon>Myomorpha</taxon>
        <taxon>Muroidea</taxon>
        <taxon>Muridae</taxon>
        <taxon>Murinae</taxon>
        <taxon>Rattus</taxon>
    </lineage>
</organism>
<reference key="1">
    <citation type="submission" date="2003-04" db="EMBL/GenBank/DDBJ databases">
        <authorList>
            <person name="Huang C.Q."/>
            <person name="Wu S.L."/>
            <person name="Liu S."/>
        </authorList>
    </citation>
    <scope>NUCLEOTIDE SEQUENCE [MRNA]</scope>
</reference>
<reference key="2">
    <citation type="journal article" date="2004" name="Genome Res.">
        <title>The status, quality, and expansion of the NIH full-length cDNA project: the Mammalian Gene Collection (MGC).</title>
        <authorList>
            <consortium name="The MGC Project Team"/>
        </authorList>
    </citation>
    <scope>NUCLEOTIDE SEQUENCE [LARGE SCALE MRNA]</scope>
    <source>
        <tissue>Spleen</tissue>
    </source>
</reference>
<dbReference type="EMBL" id="AY283801">
    <property type="protein sequence ID" value="AAP37472.1"/>
    <property type="molecule type" value="mRNA"/>
</dbReference>
<dbReference type="EMBL" id="BC088092">
    <property type="protein sequence ID" value="AAH88092.1"/>
    <property type="molecule type" value="mRNA"/>
</dbReference>
<dbReference type="RefSeq" id="NP_942069.1">
    <property type="nucleotide sequence ID" value="NM_198774.2"/>
</dbReference>
<dbReference type="FunCoup" id="Q7TSW6">
    <property type="interactions" value="1162"/>
</dbReference>
<dbReference type="STRING" id="10116.ENSRNOP00000023314"/>
<dbReference type="PhosphoSitePlus" id="Q7TSW6"/>
<dbReference type="PaxDb" id="10116-ENSRNOP00000023314"/>
<dbReference type="Ensembl" id="ENSRNOT00000023314.5">
    <property type="protein sequence ID" value="ENSRNOP00000023314.4"/>
    <property type="gene ID" value="ENSRNOG00000017051.5"/>
</dbReference>
<dbReference type="GeneID" id="361110"/>
<dbReference type="KEGG" id="rno:361110"/>
<dbReference type="UCSC" id="RGD:735152">
    <property type="organism name" value="rat"/>
</dbReference>
<dbReference type="AGR" id="RGD:735152"/>
<dbReference type="CTD" id="375346"/>
<dbReference type="RGD" id="735152">
    <property type="gene designation" value="Stimate"/>
</dbReference>
<dbReference type="eggNOG" id="ENOG502S1HE">
    <property type="taxonomic scope" value="Eukaryota"/>
</dbReference>
<dbReference type="GeneTree" id="ENSGT00940000153920"/>
<dbReference type="HOGENOM" id="CLU_040321_1_0_1"/>
<dbReference type="InParanoid" id="Q7TSW6"/>
<dbReference type="OMA" id="LNCFQYF"/>
<dbReference type="OrthoDB" id="79526at9989"/>
<dbReference type="PhylomeDB" id="Q7TSW6"/>
<dbReference type="TreeFam" id="TF324457"/>
<dbReference type="PRO" id="PR:Q7TSW6"/>
<dbReference type="Proteomes" id="UP000002494">
    <property type="component" value="Chromosome 16"/>
</dbReference>
<dbReference type="Bgee" id="ENSRNOG00000017051">
    <property type="expression patterns" value="Expressed in pancreas and 20 other cell types or tissues"/>
</dbReference>
<dbReference type="GO" id="GO:0032541">
    <property type="term" value="C:cortical endoplasmic reticulum"/>
    <property type="evidence" value="ECO:0000250"/>
    <property type="project" value="UniProtKB"/>
</dbReference>
<dbReference type="GO" id="GO:0005789">
    <property type="term" value="C:endoplasmic reticulum membrane"/>
    <property type="evidence" value="ECO:0000250"/>
    <property type="project" value="UniProtKB"/>
</dbReference>
<dbReference type="GO" id="GO:0140268">
    <property type="term" value="C:endoplasmic reticulum-plasma membrane contact site"/>
    <property type="evidence" value="ECO:0000250"/>
    <property type="project" value="UniProtKB"/>
</dbReference>
<dbReference type="GO" id="GO:0016020">
    <property type="term" value="C:membrane"/>
    <property type="evidence" value="ECO:0000318"/>
    <property type="project" value="GO_Central"/>
</dbReference>
<dbReference type="GO" id="GO:0005246">
    <property type="term" value="F:calcium channel regulator activity"/>
    <property type="evidence" value="ECO:0000250"/>
    <property type="project" value="UniProtKB"/>
</dbReference>
<dbReference type="GO" id="GO:0032237">
    <property type="term" value="P:activation of store-operated calcium channel activity"/>
    <property type="evidence" value="ECO:0000250"/>
    <property type="project" value="UniProtKB"/>
</dbReference>
<dbReference type="GO" id="GO:0002115">
    <property type="term" value="P:store-operated calcium entry"/>
    <property type="evidence" value="ECO:0000250"/>
    <property type="project" value="UniProtKB"/>
</dbReference>
<dbReference type="InterPro" id="IPR022127">
    <property type="entry name" value="STIMATE/YPL162C"/>
</dbReference>
<dbReference type="PANTHER" id="PTHR31735:SF2">
    <property type="entry name" value="STORE-OPERATED CALCIUM ENTRY REGULATOR STIMATE"/>
    <property type="match status" value="1"/>
</dbReference>
<dbReference type="PANTHER" id="PTHR31735">
    <property type="entry name" value="VACUOLAR MEMBRANE PROTEIN YPL162C"/>
    <property type="match status" value="1"/>
</dbReference>
<dbReference type="Pfam" id="PF12400">
    <property type="entry name" value="STIMATE"/>
    <property type="match status" value="1"/>
</dbReference>
<gene>
    <name evidence="1" type="primary">Stimate</name>
    <name evidence="5" type="synonym">Tmem110</name>
</gene>
<keyword id="KW-0256">Endoplasmic reticulum</keyword>
<keyword id="KW-0472">Membrane</keyword>
<keyword id="KW-1185">Reference proteome</keyword>
<keyword id="KW-0812">Transmembrane</keyword>
<keyword id="KW-1133">Transmembrane helix</keyword>